<feature type="chain" id="PRO_1000092351" description="Hydroxylamine reductase">
    <location>
        <begin position="1"/>
        <end position="550"/>
    </location>
</feature>
<feature type="binding site" evidence="1">
    <location>
        <position position="3"/>
    </location>
    <ligand>
        <name>[2Fe-2S] cluster</name>
        <dbReference type="ChEBI" id="CHEBI:190135"/>
    </ligand>
</feature>
<feature type="binding site" evidence="1">
    <location>
        <position position="6"/>
    </location>
    <ligand>
        <name>[2Fe-2S] cluster</name>
        <dbReference type="ChEBI" id="CHEBI:190135"/>
    </ligand>
</feature>
<feature type="binding site" evidence="1">
    <location>
        <position position="18"/>
    </location>
    <ligand>
        <name>[2Fe-2S] cluster</name>
        <dbReference type="ChEBI" id="CHEBI:190135"/>
    </ligand>
</feature>
<feature type="binding site" evidence="1">
    <location>
        <position position="25"/>
    </location>
    <ligand>
        <name>[2Fe-2S] cluster</name>
        <dbReference type="ChEBI" id="CHEBI:190135"/>
    </ligand>
</feature>
<feature type="binding site" evidence="1">
    <location>
        <position position="249"/>
    </location>
    <ligand>
        <name>hybrid [4Fe-2O-2S] cluster</name>
        <dbReference type="ChEBI" id="CHEBI:60519"/>
    </ligand>
</feature>
<feature type="binding site" evidence="1">
    <location>
        <position position="273"/>
    </location>
    <ligand>
        <name>hybrid [4Fe-2O-2S] cluster</name>
        <dbReference type="ChEBI" id="CHEBI:60519"/>
    </ligand>
</feature>
<feature type="binding site" evidence="1">
    <location>
        <position position="317"/>
    </location>
    <ligand>
        <name>hybrid [4Fe-2O-2S] cluster</name>
        <dbReference type="ChEBI" id="CHEBI:60519"/>
    </ligand>
</feature>
<feature type="binding site" description="via persulfide group" evidence="1">
    <location>
        <position position="405"/>
    </location>
    <ligand>
        <name>hybrid [4Fe-2O-2S] cluster</name>
        <dbReference type="ChEBI" id="CHEBI:60519"/>
    </ligand>
</feature>
<feature type="binding site" evidence="1">
    <location>
        <position position="433"/>
    </location>
    <ligand>
        <name>hybrid [4Fe-2O-2S] cluster</name>
        <dbReference type="ChEBI" id="CHEBI:60519"/>
    </ligand>
</feature>
<feature type="binding site" evidence="1">
    <location>
        <position position="458"/>
    </location>
    <ligand>
        <name>hybrid [4Fe-2O-2S] cluster</name>
        <dbReference type="ChEBI" id="CHEBI:60519"/>
    </ligand>
</feature>
<feature type="binding site" evidence="1">
    <location>
        <position position="492"/>
    </location>
    <ligand>
        <name>hybrid [4Fe-2O-2S] cluster</name>
        <dbReference type="ChEBI" id="CHEBI:60519"/>
    </ligand>
</feature>
<feature type="binding site" evidence="1">
    <location>
        <position position="494"/>
    </location>
    <ligand>
        <name>hybrid [4Fe-2O-2S] cluster</name>
        <dbReference type="ChEBI" id="CHEBI:60519"/>
    </ligand>
</feature>
<feature type="modified residue" description="Cysteine persulfide" evidence="1">
    <location>
        <position position="405"/>
    </location>
</feature>
<dbReference type="EC" id="1.7.99.1" evidence="1"/>
<dbReference type="EMBL" id="CP001127">
    <property type="protein sequence ID" value="ACF89155.1"/>
    <property type="molecule type" value="Genomic_DNA"/>
</dbReference>
<dbReference type="RefSeq" id="WP_000458787.1">
    <property type="nucleotide sequence ID" value="NC_011094.1"/>
</dbReference>
<dbReference type="SMR" id="B4TRQ3"/>
<dbReference type="KEGG" id="sew:SeSA_A1054"/>
<dbReference type="HOGENOM" id="CLU_038344_2_0_6"/>
<dbReference type="Proteomes" id="UP000001865">
    <property type="component" value="Chromosome"/>
</dbReference>
<dbReference type="GO" id="GO:0005737">
    <property type="term" value="C:cytoplasm"/>
    <property type="evidence" value="ECO:0007669"/>
    <property type="project" value="UniProtKB-SubCell"/>
</dbReference>
<dbReference type="GO" id="GO:0051537">
    <property type="term" value="F:2 iron, 2 sulfur cluster binding"/>
    <property type="evidence" value="ECO:0007669"/>
    <property type="project" value="UniProtKB-KW"/>
</dbReference>
<dbReference type="GO" id="GO:0050418">
    <property type="term" value="F:hydroxylamine reductase activity"/>
    <property type="evidence" value="ECO:0007669"/>
    <property type="project" value="UniProtKB-UniRule"/>
</dbReference>
<dbReference type="GO" id="GO:0046872">
    <property type="term" value="F:metal ion binding"/>
    <property type="evidence" value="ECO:0007669"/>
    <property type="project" value="UniProtKB-KW"/>
</dbReference>
<dbReference type="GO" id="GO:0004601">
    <property type="term" value="F:peroxidase activity"/>
    <property type="evidence" value="ECO:0007669"/>
    <property type="project" value="TreeGrafter"/>
</dbReference>
<dbReference type="GO" id="GO:0042542">
    <property type="term" value="P:response to hydrogen peroxide"/>
    <property type="evidence" value="ECO:0007669"/>
    <property type="project" value="TreeGrafter"/>
</dbReference>
<dbReference type="CDD" id="cd01914">
    <property type="entry name" value="HCP"/>
    <property type="match status" value="1"/>
</dbReference>
<dbReference type="FunFam" id="1.20.1270.20:FF:000001">
    <property type="entry name" value="Hydroxylamine reductase"/>
    <property type="match status" value="1"/>
</dbReference>
<dbReference type="FunFam" id="1.20.1270.20:FF:000002">
    <property type="entry name" value="Hydroxylamine reductase"/>
    <property type="match status" value="1"/>
</dbReference>
<dbReference type="FunFam" id="3.40.50.2030:FF:000001">
    <property type="entry name" value="Hydroxylamine reductase"/>
    <property type="match status" value="1"/>
</dbReference>
<dbReference type="FunFam" id="3.40.50.2030:FF:000002">
    <property type="entry name" value="Hydroxylamine reductase"/>
    <property type="match status" value="1"/>
</dbReference>
<dbReference type="Gene3D" id="1.20.1270.20">
    <property type="match status" value="2"/>
</dbReference>
<dbReference type="Gene3D" id="3.40.50.2030">
    <property type="match status" value="2"/>
</dbReference>
<dbReference type="HAMAP" id="MF_00069">
    <property type="entry name" value="Hydroxylam_reduct"/>
    <property type="match status" value="1"/>
</dbReference>
<dbReference type="InterPro" id="IPR004137">
    <property type="entry name" value="HCP/CODH"/>
</dbReference>
<dbReference type="InterPro" id="IPR010048">
    <property type="entry name" value="Hydroxylam_reduct"/>
</dbReference>
<dbReference type="InterPro" id="IPR016099">
    <property type="entry name" value="Prismane-like_a/b-sand"/>
</dbReference>
<dbReference type="InterPro" id="IPR011254">
    <property type="entry name" value="Prismane-like_sf"/>
</dbReference>
<dbReference type="InterPro" id="IPR016100">
    <property type="entry name" value="Prismane_a-bundle"/>
</dbReference>
<dbReference type="NCBIfam" id="TIGR01703">
    <property type="entry name" value="hybrid_clust"/>
    <property type="match status" value="1"/>
</dbReference>
<dbReference type="NCBIfam" id="NF003658">
    <property type="entry name" value="PRK05290.1"/>
    <property type="match status" value="1"/>
</dbReference>
<dbReference type="PANTHER" id="PTHR30109">
    <property type="entry name" value="HYDROXYLAMINE REDUCTASE"/>
    <property type="match status" value="1"/>
</dbReference>
<dbReference type="PANTHER" id="PTHR30109:SF0">
    <property type="entry name" value="HYDROXYLAMINE REDUCTASE"/>
    <property type="match status" value="1"/>
</dbReference>
<dbReference type="Pfam" id="PF03063">
    <property type="entry name" value="Prismane"/>
    <property type="match status" value="1"/>
</dbReference>
<dbReference type="PIRSF" id="PIRSF000076">
    <property type="entry name" value="HCP"/>
    <property type="match status" value="1"/>
</dbReference>
<dbReference type="SUPFAM" id="SSF56821">
    <property type="entry name" value="Prismane protein-like"/>
    <property type="match status" value="1"/>
</dbReference>
<sequence>MFCVQCEQTIRTPAGNGCSYAQGMCGKTAETSDLQDLLIAALQGLSAWAVKAREYGIINHDVDNFAPRAFFSTLTNVNFDSPRIVGYAREAIALREALKAQCLSVDANAHCDNPMADLQLVSDDLGELQRQAAEFTPNKDKAAIGENILGLRLLCLYGLKGAAAYMEHAHVLGQYDNDIYAQYHKIMAWLGTWPADMNALLECAMEIGQMNFKVMSILDAGETTKYGHPTPTQVNVKATEGKCILISGHDLKDLYNLLEQTEGTGVNVYTHGEMLPAHGYPELRKFKHLVGNYGSGWQNQQVEFARFPGPIVMTSNCIIDPTVGSYDDRIWTRSIVGWPGVSHLEGDDFGPVIAQAQQMAGFPYSEIPHLITVGFGRQTLLGAADTLIDLVSRKKLRHIFLVGGCDGARGERNYFTDFATSVPDDCLILTLACGKYRFNKLEFGDIEGLPRLVDAGQCNDAYSAIILAVTLAEKLGCGVNDLPLSLVLSWFEQKAIVILLTLLSLGVKNIVTGPTAPGFFTPDLLAILNEKFGLRSVTTVEEDMKQLLSA</sequence>
<keyword id="KW-0001">2Fe-2S</keyword>
<keyword id="KW-0963">Cytoplasm</keyword>
<keyword id="KW-0408">Iron</keyword>
<keyword id="KW-0411">Iron-sulfur</keyword>
<keyword id="KW-0479">Metal-binding</keyword>
<keyword id="KW-0560">Oxidoreductase</keyword>
<proteinExistence type="inferred from homology"/>
<reference key="1">
    <citation type="journal article" date="2011" name="J. Bacteriol.">
        <title>Comparative genomics of 28 Salmonella enterica isolates: evidence for CRISPR-mediated adaptive sublineage evolution.</title>
        <authorList>
            <person name="Fricke W.F."/>
            <person name="Mammel M.K."/>
            <person name="McDermott P.F."/>
            <person name="Tartera C."/>
            <person name="White D.G."/>
            <person name="Leclerc J.E."/>
            <person name="Ravel J."/>
            <person name="Cebula T.A."/>
        </authorList>
    </citation>
    <scope>NUCLEOTIDE SEQUENCE [LARGE SCALE GENOMIC DNA]</scope>
    <source>
        <strain>CVM19633</strain>
    </source>
</reference>
<accession>B4TRQ3</accession>
<organism>
    <name type="scientific">Salmonella schwarzengrund (strain CVM19633)</name>
    <dbReference type="NCBI Taxonomy" id="439843"/>
    <lineage>
        <taxon>Bacteria</taxon>
        <taxon>Pseudomonadati</taxon>
        <taxon>Pseudomonadota</taxon>
        <taxon>Gammaproteobacteria</taxon>
        <taxon>Enterobacterales</taxon>
        <taxon>Enterobacteriaceae</taxon>
        <taxon>Salmonella</taxon>
    </lineage>
</organism>
<protein>
    <recommendedName>
        <fullName evidence="1">Hydroxylamine reductase</fullName>
        <ecNumber evidence="1">1.7.99.1</ecNumber>
    </recommendedName>
    <alternativeName>
        <fullName evidence="1">Hybrid-cluster protein</fullName>
        <shortName evidence="1">HCP</shortName>
    </alternativeName>
    <alternativeName>
        <fullName evidence="1">Prismane protein</fullName>
    </alternativeName>
</protein>
<name>HCP_SALSV</name>
<gene>
    <name evidence="1" type="primary">hcp</name>
    <name type="ordered locus">SeSA_A1054</name>
</gene>
<comment type="function">
    <text evidence="1">Catalyzes the reduction of hydroxylamine to form NH(3) and H(2)O.</text>
</comment>
<comment type="catalytic activity">
    <reaction evidence="1">
        <text>A + NH4(+) + H2O = hydroxylamine + AH2 + H(+)</text>
        <dbReference type="Rhea" id="RHEA:22052"/>
        <dbReference type="ChEBI" id="CHEBI:13193"/>
        <dbReference type="ChEBI" id="CHEBI:15377"/>
        <dbReference type="ChEBI" id="CHEBI:15378"/>
        <dbReference type="ChEBI" id="CHEBI:15429"/>
        <dbReference type="ChEBI" id="CHEBI:17499"/>
        <dbReference type="ChEBI" id="CHEBI:28938"/>
        <dbReference type="EC" id="1.7.99.1"/>
    </reaction>
</comment>
<comment type="cofactor">
    <cofactor evidence="1">
        <name>[2Fe-2S] cluster</name>
        <dbReference type="ChEBI" id="CHEBI:190135"/>
    </cofactor>
    <text evidence="1">Binds 1 [2Fe-2S] cluster.</text>
</comment>
<comment type="cofactor">
    <cofactor evidence="1">
        <name>hybrid [4Fe-2O-2S] cluster</name>
        <dbReference type="ChEBI" id="CHEBI:60519"/>
    </cofactor>
    <text evidence="1">Binds 1 hybrid [4Fe-2O-2S] cluster.</text>
</comment>
<comment type="subcellular location">
    <subcellularLocation>
        <location evidence="1">Cytoplasm</location>
    </subcellularLocation>
</comment>
<comment type="similarity">
    <text evidence="1">Belongs to the HCP family.</text>
</comment>
<evidence type="ECO:0000255" key="1">
    <source>
        <dbReference type="HAMAP-Rule" id="MF_00069"/>
    </source>
</evidence>